<keyword id="KW-0687">Ribonucleoprotein</keyword>
<keyword id="KW-0689">Ribosomal protein</keyword>
<proteinExistence type="inferred from homology"/>
<feature type="chain" id="PRO_0000225760" description="Large ribosomal subunit protein bL32">
    <location>
        <begin position="1"/>
        <end position="57"/>
    </location>
</feature>
<feature type="region of interest" description="Disordered" evidence="2">
    <location>
        <begin position="1"/>
        <end position="38"/>
    </location>
</feature>
<sequence>MAVQQNKPTRSKRGMRRSHDALTAVTSLSVDKTSGEKHLRHHITADGYYRGRKVIAK</sequence>
<comment type="similarity">
    <text evidence="1">Belongs to the bacterial ribosomal protein bL32 family.</text>
</comment>
<protein>
    <recommendedName>
        <fullName evidence="1">Large ribosomal subunit protein bL32</fullName>
    </recommendedName>
    <alternativeName>
        <fullName evidence="3">50S ribosomal protein L32</fullName>
    </alternativeName>
</protein>
<organism>
    <name type="scientific">Salmonella choleraesuis (strain SC-B67)</name>
    <dbReference type="NCBI Taxonomy" id="321314"/>
    <lineage>
        <taxon>Bacteria</taxon>
        <taxon>Pseudomonadati</taxon>
        <taxon>Pseudomonadota</taxon>
        <taxon>Gammaproteobacteria</taxon>
        <taxon>Enterobacterales</taxon>
        <taxon>Enterobacteriaceae</taxon>
        <taxon>Salmonella</taxon>
    </lineage>
</organism>
<reference key="1">
    <citation type="journal article" date="2005" name="Nucleic Acids Res.">
        <title>The genome sequence of Salmonella enterica serovar Choleraesuis, a highly invasive and resistant zoonotic pathogen.</title>
        <authorList>
            <person name="Chiu C.-H."/>
            <person name="Tang P."/>
            <person name="Chu C."/>
            <person name="Hu S."/>
            <person name="Bao Q."/>
            <person name="Yu J."/>
            <person name="Chou Y.-Y."/>
            <person name="Wang H.-S."/>
            <person name="Lee Y.-S."/>
        </authorList>
    </citation>
    <scope>NUCLEOTIDE SEQUENCE [LARGE SCALE GENOMIC DNA]</scope>
    <source>
        <strain>SC-B67</strain>
    </source>
</reference>
<evidence type="ECO:0000255" key="1">
    <source>
        <dbReference type="HAMAP-Rule" id="MF_00340"/>
    </source>
</evidence>
<evidence type="ECO:0000256" key="2">
    <source>
        <dbReference type="SAM" id="MobiDB-lite"/>
    </source>
</evidence>
<evidence type="ECO:0000305" key="3"/>
<name>RL32_SALCH</name>
<accession>Q57QG6</accession>
<dbReference type="EMBL" id="AE017220">
    <property type="protein sequence ID" value="AAX65045.1"/>
    <property type="molecule type" value="Genomic_DNA"/>
</dbReference>
<dbReference type="RefSeq" id="WP_000290727.1">
    <property type="nucleotide sequence ID" value="NC_006905.1"/>
</dbReference>
<dbReference type="SMR" id="Q57QG6"/>
<dbReference type="GeneID" id="93776319"/>
<dbReference type="KEGG" id="sec:SCH_1139"/>
<dbReference type="HOGENOM" id="CLU_129084_2_1_6"/>
<dbReference type="Proteomes" id="UP000000538">
    <property type="component" value="Chromosome"/>
</dbReference>
<dbReference type="GO" id="GO:0015934">
    <property type="term" value="C:large ribosomal subunit"/>
    <property type="evidence" value="ECO:0007669"/>
    <property type="project" value="InterPro"/>
</dbReference>
<dbReference type="GO" id="GO:0003735">
    <property type="term" value="F:structural constituent of ribosome"/>
    <property type="evidence" value="ECO:0007669"/>
    <property type="project" value="InterPro"/>
</dbReference>
<dbReference type="GO" id="GO:0006412">
    <property type="term" value="P:translation"/>
    <property type="evidence" value="ECO:0007669"/>
    <property type="project" value="UniProtKB-UniRule"/>
</dbReference>
<dbReference type="HAMAP" id="MF_00340">
    <property type="entry name" value="Ribosomal_bL32"/>
    <property type="match status" value="1"/>
</dbReference>
<dbReference type="InterPro" id="IPR002677">
    <property type="entry name" value="Ribosomal_bL32"/>
</dbReference>
<dbReference type="InterPro" id="IPR044957">
    <property type="entry name" value="Ribosomal_bL32_bact"/>
</dbReference>
<dbReference type="InterPro" id="IPR011332">
    <property type="entry name" value="Ribosomal_zn-bd"/>
</dbReference>
<dbReference type="NCBIfam" id="TIGR01031">
    <property type="entry name" value="rpmF_bact"/>
    <property type="match status" value="1"/>
</dbReference>
<dbReference type="PANTHER" id="PTHR35534">
    <property type="entry name" value="50S RIBOSOMAL PROTEIN L32"/>
    <property type="match status" value="1"/>
</dbReference>
<dbReference type="PANTHER" id="PTHR35534:SF1">
    <property type="entry name" value="LARGE RIBOSOMAL SUBUNIT PROTEIN BL32"/>
    <property type="match status" value="1"/>
</dbReference>
<dbReference type="Pfam" id="PF01783">
    <property type="entry name" value="Ribosomal_L32p"/>
    <property type="match status" value="1"/>
</dbReference>
<dbReference type="SUPFAM" id="SSF57829">
    <property type="entry name" value="Zn-binding ribosomal proteins"/>
    <property type="match status" value="1"/>
</dbReference>
<gene>
    <name evidence="1" type="primary">rpmF</name>
    <name type="ordered locus">SCH_1139</name>
</gene>